<evidence type="ECO:0000255" key="1">
    <source>
        <dbReference type="HAMAP-Rule" id="MF_00539"/>
    </source>
</evidence>
<evidence type="ECO:0000256" key="2">
    <source>
        <dbReference type="SAM" id="MobiDB-lite"/>
    </source>
</evidence>
<evidence type="ECO:0000305" key="3"/>
<sequence>MAKTKAGGSTKNGRDSAGRRLGQKIGDGQFALTGSIIYRQRGTRIYPGKNVGIGNDDSLFALVDGIVKFQKIRKRKYATVVMAK</sequence>
<feature type="chain" id="PRO_0000181122" description="Large ribosomal subunit protein bL27">
    <location>
        <begin position="1"/>
        <end position="84"/>
    </location>
</feature>
<feature type="region of interest" description="Disordered" evidence="2">
    <location>
        <begin position="1"/>
        <end position="22"/>
    </location>
</feature>
<keyword id="KW-0687">Ribonucleoprotein</keyword>
<keyword id="KW-0689">Ribosomal protein</keyword>
<organism>
    <name type="scientific">Mesomycoplasma hyopneumoniae (strain 232)</name>
    <name type="common">Mycoplasma hyopneumoniae</name>
    <dbReference type="NCBI Taxonomy" id="295358"/>
    <lineage>
        <taxon>Bacteria</taxon>
        <taxon>Bacillati</taxon>
        <taxon>Mycoplasmatota</taxon>
        <taxon>Mycoplasmoidales</taxon>
        <taxon>Metamycoplasmataceae</taxon>
        <taxon>Mesomycoplasma</taxon>
    </lineage>
</organism>
<name>RL27_MESH2</name>
<comment type="similarity">
    <text evidence="1">Belongs to the bacterial ribosomal protein bL27 family.</text>
</comment>
<protein>
    <recommendedName>
        <fullName evidence="1">Large ribosomal subunit protein bL27</fullName>
    </recommendedName>
    <alternativeName>
        <fullName evidence="3">50S ribosomal protein L27</fullName>
    </alternativeName>
</protein>
<accession>Q601F3</accession>
<gene>
    <name evidence="1" type="primary">rpmA</name>
    <name evidence="1" type="synonym">rpl27</name>
    <name type="ordered locus">mhp249</name>
</gene>
<proteinExistence type="inferred from homology"/>
<dbReference type="EMBL" id="AE017332">
    <property type="protein sequence ID" value="AAV27789.1"/>
    <property type="molecule type" value="Genomic_DNA"/>
</dbReference>
<dbReference type="RefSeq" id="WP_011206086.1">
    <property type="nucleotide sequence ID" value="NC_006360.1"/>
</dbReference>
<dbReference type="SMR" id="Q601F3"/>
<dbReference type="GeneID" id="41334430"/>
<dbReference type="KEGG" id="mhy:mhp249"/>
<dbReference type="eggNOG" id="COG0211">
    <property type="taxonomic scope" value="Bacteria"/>
</dbReference>
<dbReference type="HOGENOM" id="CLU_095424_4_1_14"/>
<dbReference type="PhylomeDB" id="Q601F3"/>
<dbReference type="Proteomes" id="UP000006822">
    <property type="component" value="Chromosome"/>
</dbReference>
<dbReference type="GO" id="GO:0022625">
    <property type="term" value="C:cytosolic large ribosomal subunit"/>
    <property type="evidence" value="ECO:0007669"/>
    <property type="project" value="TreeGrafter"/>
</dbReference>
<dbReference type="GO" id="GO:0003735">
    <property type="term" value="F:structural constituent of ribosome"/>
    <property type="evidence" value="ECO:0007669"/>
    <property type="project" value="InterPro"/>
</dbReference>
<dbReference type="GO" id="GO:0006412">
    <property type="term" value="P:translation"/>
    <property type="evidence" value="ECO:0007669"/>
    <property type="project" value="UniProtKB-UniRule"/>
</dbReference>
<dbReference type="FunFam" id="2.40.50.100:FF:000020">
    <property type="entry name" value="50S ribosomal protein L27"/>
    <property type="match status" value="1"/>
</dbReference>
<dbReference type="Gene3D" id="2.40.50.100">
    <property type="match status" value="1"/>
</dbReference>
<dbReference type="HAMAP" id="MF_00539">
    <property type="entry name" value="Ribosomal_bL27"/>
    <property type="match status" value="1"/>
</dbReference>
<dbReference type="InterPro" id="IPR001684">
    <property type="entry name" value="Ribosomal_bL27"/>
</dbReference>
<dbReference type="InterPro" id="IPR018261">
    <property type="entry name" value="Ribosomal_bL27_CS"/>
</dbReference>
<dbReference type="NCBIfam" id="TIGR00062">
    <property type="entry name" value="L27"/>
    <property type="match status" value="1"/>
</dbReference>
<dbReference type="PANTHER" id="PTHR15893:SF0">
    <property type="entry name" value="LARGE RIBOSOMAL SUBUNIT PROTEIN BL27M"/>
    <property type="match status" value="1"/>
</dbReference>
<dbReference type="PANTHER" id="PTHR15893">
    <property type="entry name" value="RIBOSOMAL PROTEIN L27"/>
    <property type="match status" value="1"/>
</dbReference>
<dbReference type="Pfam" id="PF01016">
    <property type="entry name" value="Ribosomal_L27"/>
    <property type="match status" value="1"/>
</dbReference>
<dbReference type="PRINTS" id="PR00063">
    <property type="entry name" value="RIBOSOMALL27"/>
</dbReference>
<dbReference type="SUPFAM" id="SSF110324">
    <property type="entry name" value="Ribosomal L27 protein-like"/>
    <property type="match status" value="1"/>
</dbReference>
<dbReference type="PROSITE" id="PS00831">
    <property type="entry name" value="RIBOSOMAL_L27"/>
    <property type="match status" value="1"/>
</dbReference>
<reference key="1">
    <citation type="journal article" date="2004" name="J. Bacteriol.">
        <title>The genome sequence of Mycoplasma hyopneumoniae strain 232, the agent of swine mycoplasmosis.</title>
        <authorList>
            <person name="Minion F.C."/>
            <person name="Lefkowitz E.J."/>
            <person name="Madsen M.L."/>
            <person name="Cleary B.J."/>
            <person name="Swartzell S.M."/>
            <person name="Mahairas G.G."/>
        </authorList>
    </citation>
    <scope>NUCLEOTIDE SEQUENCE [LARGE SCALE GENOMIC DNA]</scope>
    <source>
        <strain>232</strain>
    </source>
</reference>